<feature type="chain" id="PRO_0000084541" description="cAMP-regulated M3R protein">
    <location>
        <begin position="1"/>
        <end position="513"/>
    </location>
</feature>
<feature type="sequence conflict" description="In Ref. 3; AAA33221." evidence="1" ref="3">
    <original>T</original>
    <variation>A</variation>
    <location>
        <position position="124"/>
    </location>
</feature>
<feature type="sequence conflict" description="In Ref. 3; AAA33221." evidence="1" ref="3">
    <original>Q</original>
    <variation>K</variation>
    <location>
        <position position="128"/>
    </location>
</feature>
<feature type="sequence conflict" description="In Ref. 3; AAA33221." evidence="1" ref="3">
    <original>Y</original>
    <variation>F</variation>
    <location>
        <position position="138"/>
    </location>
</feature>
<feature type="sequence conflict" description="In Ref. 3; AAA33221." evidence="1" ref="3">
    <original>H</original>
    <variation>Q</variation>
    <location>
        <position position="156"/>
    </location>
</feature>
<feature type="sequence conflict" description="In Ref. 3; AAA33221." evidence="1" ref="3">
    <original>K</original>
    <variation>E</variation>
    <location>
        <position position="177"/>
    </location>
</feature>
<feature type="sequence conflict" description="In Ref. 3; AAA33221." evidence="1" ref="3">
    <location>
        <position position="184"/>
    </location>
</feature>
<feature type="sequence conflict" description="In Ref. 3; AAA33221." evidence="1" ref="3">
    <original>L</original>
    <variation>T</variation>
    <location>
        <position position="256"/>
    </location>
</feature>
<accession>P11872</accession>
<accession>Q55AQ6</accession>
<accession>Q75JB2</accession>
<sequence>MESLKNNGEKIENFLNQLKNLQSNVDKDFKEFSNSPNTLNAEKDGEFLDKHDEELYNKQIIRSRLEDKISNLSSSMINDIGNDFQTGFQTILYNLPGVGPVFQMIFNIMGNGINLEKFYQEIITQVEQMIKKSLEDYYKNQCNTIFKNLGKACDQHKDLTQKWYDKNGIKSMNHLGKEIPQSTSSTIESDDTLTPMIHASYLDLKIKFNDAITSFTDAKYRGHVAPLLTYTSVMYVAFLRDILKYGKEMKFDDSVLNGSANTPGIKKMLNDFVNVTLSEFLISGREYTNVVNSLQEGYWITYPPPIYKVWVPPQQASWVSPPASELAHKFFLAHSDNYPQGGDLIYIKKDGVYELSPNKITHALEVYYSSGGGYGVNDYPSFRYGGKPIIPLLAPVGNAVFTMLNPNRYKRTFKIRIVHVIVREAKWNLDCYDNQVGEAGSFNQNFVFTSTNIVSDPICGNIGTVGITEIPGPFTTDKKYIRLTCIRKVNFPASKNEGYAVGSRILSVQLIDL</sequence>
<organism>
    <name type="scientific">Dictyostelium discoideum</name>
    <name type="common">Social amoeba</name>
    <dbReference type="NCBI Taxonomy" id="44689"/>
    <lineage>
        <taxon>Eukaryota</taxon>
        <taxon>Amoebozoa</taxon>
        <taxon>Evosea</taxon>
        <taxon>Eumycetozoa</taxon>
        <taxon>Dictyostelia</taxon>
        <taxon>Dictyosteliales</taxon>
        <taxon>Dictyosteliaceae</taxon>
        <taxon>Dictyostelium</taxon>
    </lineage>
</organism>
<comment type="induction">
    <text>Stimulation by changing levels of cAMP via the cell surface cAMP receptor.</text>
</comment>
<comment type="similarity">
    <text evidence="1">To D.discoideum protein M3L.</text>
</comment>
<name>M3R_DICDI</name>
<protein>
    <recommendedName>
        <fullName>cAMP-regulated M3R protein</fullName>
    </recommendedName>
    <alternativeName>
        <fullName>Proteasomal alpha-subunit 7-1</fullName>
    </alternativeName>
</protein>
<dbReference type="EMBL" id="AAFI02000006">
    <property type="protein sequence ID" value="EAL71523.2"/>
    <property type="molecule type" value="Genomic_DNA"/>
</dbReference>
<dbReference type="EMBL" id="M15968">
    <property type="protein sequence ID" value="AAA33221.1"/>
    <property type="molecule type" value="Genomic_DNA"/>
</dbReference>
<dbReference type="PIR" id="A26720">
    <property type="entry name" value="A26720"/>
</dbReference>
<dbReference type="RefSeq" id="XP_645466.2">
    <property type="nucleotide sequence ID" value="XM_640374.2"/>
</dbReference>
<dbReference type="SMR" id="P11872"/>
<dbReference type="STRING" id="44689.P11872"/>
<dbReference type="PaxDb" id="44689-DDB0185115"/>
<dbReference type="EnsemblProtists" id="EAL71523">
    <property type="protein sequence ID" value="EAL71523"/>
    <property type="gene ID" value="DDB_G0271666"/>
</dbReference>
<dbReference type="GeneID" id="8618094"/>
<dbReference type="KEGG" id="ddi:DDB_G0271666"/>
<dbReference type="dictyBase" id="DDB_G0271666">
    <property type="gene designation" value="prtB"/>
</dbReference>
<dbReference type="VEuPathDB" id="AmoebaDB:DDB_G0271666"/>
<dbReference type="HOGENOM" id="CLU_531497_0_0_1"/>
<dbReference type="InParanoid" id="P11872"/>
<dbReference type="PhylomeDB" id="P11872"/>
<dbReference type="PRO" id="PR:P11872"/>
<dbReference type="Proteomes" id="UP000002195">
    <property type="component" value="Chromosome 2"/>
</dbReference>
<dbReference type="GO" id="GO:0090729">
    <property type="term" value="F:toxin activity"/>
    <property type="evidence" value="ECO:0007669"/>
    <property type="project" value="InterPro"/>
</dbReference>
<dbReference type="Gene3D" id="1.20.190.10">
    <property type="entry name" value="Pesticidal crystal protein, N-terminal domain"/>
    <property type="match status" value="1"/>
</dbReference>
<dbReference type="InterPro" id="IPR036716">
    <property type="entry name" value="Pest_crys_N_sf"/>
</dbReference>
<dbReference type="PANTHER" id="PTHR37514">
    <property type="entry name" value="N-TERMINAL DELTA ENDOTOXIN DOMAIN-CONTAINING PROTEIN-RELATED"/>
    <property type="match status" value="1"/>
</dbReference>
<dbReference type="PANTHER" id="PTHR37514:SF1">
    <property type="entry name" value="N-TERMINAL DELTA ENDOTOXIN DOMAIN-CONTAINING PROTEIN-RELATED"/>
    <property type="match status" value="1"/>
</dbReference>
<dbReference type="SUPFAM" id="SSF56849">
    <property type="entry name" value="delta-Endotoxin (insectocide), N-terminal domain"/>
    <property type="match status" value="1"/>
</dbReference>
<evidence type="ECO:0000305" key="1"/>
<gene>
    <name type="primary">prtB</name>
    <name type="synonym">M3R</name>
    <name type="ORF">DDB_G0271666</name>
</gene>
<proteinExistence type="evidence at transcript level"/>
<keyword id="KW-0114">cAMP</keyword>
<keyword id="KW-1185">Reference proteome</keyword>
<reference key="1">
    <citation type="journal article" date="2002" name="Nature">
        <title>Sequence and analysis of chromosome 2 of Dictyostelium discoideum.</title>
        <authorList>
            <person name="Gloeckner G."/>
            <person name="Eichinger L."/>
            <person name="Szafranski K."/>
            <person name="Pachebat J.A."/>
            <person name="Bankier A.T."/>
            <person name="Dear P.H."/>
            <person name="Lehmann R."/>
            <person name="Baumgart C."/>
            <person name="Parra G."/>
            <person name="Abril J.F."/>
            <person name="Guigo R."/>
            <person name="Kumpf K."/>
            <person name="Tunggal B."/>
            <person name="Cox E.C."/>
            <person name="Quail M.A."/>
            <person name="Platzer M."/>
            <person name="Rosenthal A."/>
            <person name="Noegel A.A."/>
        </authorList>
    </citation>
    <scope>NUCLEOTIDE SEQUENCE [LARGE SCALE GENOMIC DNA]</scope>
    <source>
        <strain>AX4</strain>
    </source>
</reference>
<reference key="2">
    <citation type="journal article" date="2005" name="Nature">
        <title>The genome of the social amoeba Dictyostelium discoideum.</title>
        <authorList>
            <person name="Eichinger L."/>
            <person name="Pachebat J.A."/>
            <person name="Gloeckner G."/>
            <person name="Rajandream M.A."/>
            <person name="Sucgang R."/>
            <person name="Berriman M."/>
            <person name="Song J."/>
            <person name="Olsen R."/>
            <person name="Szafranski K."/>
            <person name="Xu Q."/>
            <person name="Tunggal B."/>
            <person name="Kummerfeld S."/>
            <person name="Madera M."/>
            <person name="Konfortov B.A."/>
            <person name="Rivero F."/>
            <person name="Bankier A.T."/>
            <person name="Lehmann R."/>
            <person name="Hamlin N."/>
            <person name="Davies R."/>
            <person name="Gaudet P."/>
            <person name="Fey P."/>
            <person name="Pilcher K."/>
            <person name="Chen G."/>
            <person name="Saunders D."/>
            <person name="Sodergren E.J."/>
            <person name="Davis P."/>
            <person name="Kerhornou A."/>
            <person name="Nie X."/>
            <person name="Hall N."/>
            <person name="Anjard C."/>
            <person name="Hemphill L."/>
            <person name="Bason N."/>
            <person name="Farbrother P."/>
            <person name="Desany B."/>
            <person name="Just E."/>
            <person name="Morio T."/>
            <person name="Rost R."/>
            <person name="Churcher C.M."/>
            <person name="Cooper J."/>
            <person name="Haydock S."/>
            <person name="van Driessche N."/>
            <person name="Cronin A."/>
            <person name="Goodhead I."/>
            <person name="Muzny D.M."/>
            <person name="Mourier T."/>
            <person name="Pain A."/>
            <person name="Lu M."/>
            <person name="Harper D."/>
            <person name="Lindsay R."/>
            <person name="Hauser H."/>
            <person name="James K.D."/>
            <person name="Quiles M."/>
            <person name="Madan Babu M."/>
            <person name="Saito T."/>
            <person name="Buchrieser C."/>
            <person name="Wardroper A."/>
            <person name="Felder M."/>
            <person name="Thangavelu M."/>
            <person name="Johnson D."/>
            <person name="Knights A."/>
            <person name="Loulseged H."/>
            <person name="Mungall K.L."/>
            <person name="Oliver K."/>
            <person name="Price C."/>
            <person name="Quail M.A."/>
            <person name="Urushihara H."/>
            <person name="Hernandez J."/>
            <person name="Rabbinowitsch E."/>
            <person name="Steffen D."/>
            <person name="Sanders M."/>
            <person name="Ma J."/>
            <person name="Kohara Y."/>
            <person name="Sharp S."/>
            <person name="Simmonds M.N."/>
            <person name="Spiegler S."/>
            <person name="Tivey A."/>
            <person name="Sugano S."/>
            <person name="White B."/>
            <person name="Walker D."/>
            <person name="Woodward J.R."/>
            <person name="Winckler T."/>
            <person name="Tanaka Y."/>
            <person name="Shaulsky G."/>
            <person name="Schleicher M."/>
            <person name="Weinstock G.M."/>
            <person name="Rosenthal A."/>
            <person name="Cox E.C."/>
            <person name="Chisholm R.L."/>
            <person name="Gibbs R.A."/>
            <person name="Loomis W.F."/>
            <person name="Platzer M."/>
            <person name="Kay R.R."/>
            <person name="Williams J.G."/>
            <person name="Dear P.H."/>
            <person name="Noegel A.A."/>
            <person name="Barrell B.G."/>
            <person name="Kuspa A."/>
        </authorList>
    </citation>
    <scope>NUCLEOTIDE SEQUENCE [LARGE SCALE GENOMIC DNA]</scope>
    <source>
        <strain>AX4</strain>
    </source>
</reference>
<reference key="3">
    <citation type="journal article" date="1987" name="Mol. Cell. Biol.">
        <title>Cyclic AMP regulation of early gene expression in Dictyostelium discoideum: mediation via the cell surface cyclic AMP receptor.</title>
        <authorList>
            <person name="Mann S.K.O."/>
            <person name="Firtel R.A."/>
        </authorList>
    </citation>
    <scope>NUCLEOTIDE SEQUENCE [GENOMIC DNA] OF 1-257</scope>
    <source>
        <strain>NC-4</strain>
    </source>
</reference>